<proteinExistence type="evidence at transcript level"/>
<evidence type="ECO:0000255" key="1"/>
<evidence type="ECO:0000269" key="2">
    <source>
    </source>
</evidence>
<evidence type="ECO:0000303" key="3">
    <source>
    </source>
</evidence>
<evidence type="ECO:0000305" key="4"/>
<dbReference type="EMBL" id="AC009755">
    <property type="protein sequence ID" value="AAF02108.1"/>
    <property type="status" value="ALT_SEQ"/>
    <property type="molecule type" value="Genomic_DNA"/>
</dbReference>
<dbReference type="EMBL" id="AC068900">
    <property type="protein sequence ID" value="AAG12601.1"/>
    <property type="status" value="ALT_SEQ"/>
    <property type="molecule type" value="Genomic_DNA"/>
</dbReference>
<dbReference type="EMBL" id="CP002686">
    <property type="protein sequence ID" value="AEE73793.1"/>
    <property type="molecule type" value="Genomic_DNA"/>
</dbReference>
<dbReference type="RefSeq" id="NP_186882.2">
    <property type="nucleotide sequence ID" value="NM_111100.3"/>
</dbReference>
<dbReference type="SMR" id="Q9FWA6"/>
<dbReference type="BioGRID" id="6448">
    <property type="interactions" value="2"/>
</dbReference>
<dbReference type="FunCoup" id="Q9FWA6">
    <property type="interactions" value="166"/>
</dbReference>
<dbReference type="STRING" id="3702.Q9FWA6"/>
<dbReference type="iPTMnet" id="Q9FWA6"/>
<dbReference type="PaxDb" id="3702-AT3G02330.1"/>
<dbReference type="ProteomicsDB" id="249168"/>
<dbReference type="EnsemblPlants" id="AT3G02330.1">
    <property type="protein sequence ID" value="AT3G02330.1"/>
    <property type="gene ID" value="AT3G02330"/>
</dbReference>
<dbReference type="GeneID" id="821115"/>
<dbReference type="Gramene" id="AT3G02330.1">
    <property type="protein sequence ID" value="AT3G02330.1"/>
    <property type="gene ID" value="AT3G02330"/>
</dbReference>
<dbReference type="KEGG" id="ath:AT3G02330"/>
<dbReference type="Araport" id="AT3G02330"/>
<dbReference type="TAIR" id="AT3G02330">
    <property type="gene designation" value="MEF13"/>
</dbReference>
<dbReference type="eggNOG" id="KOG4197">
    <property type="taxonomic scope" value="Eukaryota"/>
</dbReference>
<dbReference type="HOGENOM" id="CLU_002706_15_6_1"/>
<dbReference type="InParanoid" id="Q9FWA6"/>
<dbReference type="OMA" id="DKAHPRC"/>
<dbReference type="PhylomeDB" id="Q9FWA6"/>
<dbReference type="PRO" id="PR:Q9FWA6"/>
<dbReference type="Proteomes" id="UP000006548">
    <property type="component" value="Chromosome 3"/>
</dbReference>
<dbReference type="ExpressionAtlas" id="Q9FWA6">
    <property type="expression patterns" value="baseline and differential"/>
</dbReference>
<dbReference type="GO" id="GO:0005739">
    <property type="term" value="C:mitochondrion"/>
    <property type="evidence" value="ECO:0000314"/>
    <property type="project" value="UniProtKB"/>
</dbReference>
<dbReference type="GO" id="GO:0003723">
    <property type="term" value="F:RNA binding"/>
    <property type="evidence" value="ECO:0007669"/>
    <property type="project" value="InterPro"/>
</dbReference>
<dbReference type="GO" id="GO:0016554">
    <property type="term" value="P:cytidine to uridine editing"/>
    <property type="evidence" value="ECO:0000315"/>
    <property type="project" value="TAIR"/>
</dbReference>
<dbReference type="GO" id="GO:0080156">
    <property type="term" value="P:mitochondrial mRNA modification"/>
    <property type="evidence" value="ECO:0000315"/>
    <property type="project" value="TAIR"/>
</dbReference>
<dbReference type="GO" id="GO:0006397">
    <property type="term" value="P:mRNA processing"/>
    <property type="evidence" value="ECO:0007669"/>
    <property type="project" value="UniProtKB-KW"/>
</dbReference>
<dbReference type="FunFam" id="1.25.40.10:FF:000670">
    <property type="entry name" value="Pentatricopeptide repeat-containing protein"/>
    <property type="match status" value="1"/>
</dbReference>
<dbReference type="FunFam" id="1.25.40.10:FF:003697">
    <property type="entry name" value="Pentatricopeptide repeat-containing protein At3g02330, mitochondrial"/>
    <property type="match status" value="1"/>
</dbReference>
<dbReference type="FunFam" id="1.25.40.10:FF:001086">
    <property type="entry name" value="Pentatricopeptide repeat-containing protein At4g33170"/>
    <property type="match status" value="1"/>
</dbReference>
<dbReference type="FunFam" id="1.25.40.10:FF:000669">
    <property type="entry name" value="Pentatricopeptide repeat-containing protein At4g33990"/>
    <property type="match status" value="1"/>
</dbReference>
<dbReference type="FunFam" id="1.25.40.10:FF:000780">
    <property type="entry name" value="Pentatricopeptide repeat-containing protein isoform A"/>
    <property type="match status" value="1"/>
</dbReference>
<dbReference type="FunFam" id="1.25.40.10:FF:000031">
    <property type="entry name" value="Pentatricopeptide repeat-containing protein mitochondrial"/>
    <property type="match status" value="1"/>
</dbReference>
<dbReference type="Gene3D" id="1.25.40.10">
    <property type="entry name" value="Tetratricopeptide repeat domain"/>
    <property type="match status" value="6"/>
</dbReference>
<dbReference type="InterPro" id="IPR046848">
    <property type="entry name" value="E_motif"/>
</dbReference>
<dbReference type="InterPro" id="IPR002885">
    <property type="entry name" value="Pentatricopeptide_rpt"/>
</dbReference>
<dbReference type="InterPro" id="IPR046960">
    <property type="entry name" value="PPR_At4g14850-like_plant"/>
</dbReference>
<dbReference type="InterPro" id="IPR011990">
    <property type="entry name" value="TPR-like_helical_dom_sf"/>
</dbReference>
<dbReference type="NCBIfam" id="TIGR00756">
    <property type="entry name" value="PPR"/>
    <property type="match status" value="7"/>
</dbReference>
<dbReference type="PANTHER" id="PTHR47926">
    <property type="entry name" value="PENTATRICOPEPTIDE REPEAT-CONTAINING PROTEIN"/>
    <property type="match status" value="1"/>
</dbReference>
<dbReference type="PANTHER" id="PTHR47926:SF406">
    <property type="entry name" value="REPEAT (PPR) SUPERFAMILY PROTEIN, PUTATIVE-RELATED"/>
    <property type="match status" value="1"/>
</dbReference>
<dbReference type="Pfam" id="PF20431">
    <property type="entry name" value="E_motif"/>
    <property type="match status" value="1"/>
</dbReference>
<dbReference type="Pfam" id="PF01535">
    <property type="entry name" value="PPR"/>
    <property type="match status" value="6"/>
</dbReference>
<dbReference type="Pfam" id="PF13041">
    <property type="entry name" value="PPR_2"/>
    <property type="match status" value="4"/>
</dbReference>
<dbReference type="SUPFAM" id="SSF48452">
    <property type="entry name" value="TPR-like"/>
    <property type="match status" value="1"/>
</dbReference>
<dbReference type="PROSITE" id="PS51375">
    <property type="entry name" value="PPR"/>
    <property type="match status" value="21"/>
</dbReference>
<comment type="function">
    <text evidence="2">Involved in C-to-U editing of mitochondrial RNA. Required for RNA editing at 8 sites in 6 different mRNAs in mitochondria.</text>
</comment>
<comment type="subunit">
    <text evidence="2">Interacts with MORF1/RIP8.</text>
</comment>
<comment type="subcellular location">
    <subcellularLocation>
        <location evidence="2">Mitochondrion</location>
    </subcellularLocation>
</comment>
<comment type="disruption phenotype">
    <text evidence="2">Retarded growth, reduced size of leaves and length of petioles.</text>
</comment>
<comment type="similarity">
    <text evidence="4">Belongs to the PPR family. PCMP-E subfamily.</text>
</comment>
<comment type="sequence caution" evidence="4">
    <conflict type="erroneous gene model prediction">
        <sequence resource="EMBL-CDS" id="AAF02108"/>
    </conflict>
</comment>
<comment type="sequence caution" evidence="4">
    <conflict type="erroneous gene model prediction">
        <sequence resource="EMBL-CDS" id="AAG12601"/>
    </conflict>
</comment>
<comment type="online information" name="Pentatricopeptide repeat proteins">
    <link uri="https://ppr.plantenergy.uwa.edu.au"/>
</comment>
<accession>Q9FWA6</accession>
<accession>Q9SRU8</accession>
<organism>
    <name type="scientific">Arabidopsis thaliana</name>
    <name type="common">Mouse-ear cress</name>
    <dbReference type="NCBI Taxonomy" id="3702"/>
    <lineage>
        <taxon>Eukaryota</taxon>
        <taxon>Viridiplantae</taxon>
        <taxon>Streptophyta</taxon>
        <taxon>Embryophyta</taxon>
        <taxon>Tracheophyta</taxon>
        <taxon>Spermatophyta</taxon>
        <taxon>Magnoliopsida</taxon>
        <taxon>eudicotyledons</taxon>
        <taxon>Gunneridae</taxon>
        <taxon>Pentapetalae</taxon>
        <taxon>rosids</taxon>
        <taxon>malvids</taxon>
        <taxon>Brassicales</taxon>
        <taxon>Brassicaceae</taxon>
        <taxon>Camelineae</taxon>
        <taxon>Arabidopsis</taxon>
    </lineage>
</organism>
<reference key="1">
    <citation type="journal article" date="2000" name="Nature">
        <title>Sequence and analysis of chromosome 3 of the plant Arabidopsis thaliana.</title>
        <authorList>
            <person name="Salanoubat M."/>
            <person name="Lemcke K."/>
            <person name="Rieger M."/>
            <person name="Ansorge W."/>
            <person name="Unseld M."/>
            <person name="Fartmann B."/>
            <person name="Valle G."/>
            <person name="Bloecker H."/>
            <person name="Perez-Alonso M."/>
            <person name="Obermaier B."/>
            <person name="Delseny M."/>
            <person name="Boutry M."/>
            <person name="Grivell L.A."/>
            <person name="Mache R."/>
            <person name="Puigdomenech P."/>
            <person name="De Simone V."/>
            <person name="Choisne N."/>
            <person name="Artiguenave F."/>
            <person name="Robert C."/>
            <person name="Brottier P."/>
            <person name="Wincker P."/>
            <person name="Cattolico L."/>
            <person name="Weissenbach J."/>
            <person name="Saurin W."/>
            <person name="Quetier F."/>
            <person name="Schaefer M."/>
            <person name="Mueller-Auer S."/>
            <person name="Gabel C."/>
            <person name="Fuchs M."/>
            <person name="Benes V."/>
            <person name="Wurmbach E."/>
            <person name="Drzonek H."/>
            <person name="Erfle H."/>
            <person name="Jordan N."/>
            <person name="Bangert S."/>
            <person name="Wiedelmann R."/>
            <person name="Kranz H."/>
            <person name="Voss H."/>
            <person name="Holland R."/>
            <person name="Brandt P."/>
            <person name="Nyakatura G."/>
            <person name="Vezzi A."/>
            <person name="D'Angelo M."/>
            <person name="Pallavicini A."/>
            <person name="Toppo S."/>
            <person name="Simionati B."/>
            <person name="Conrad A."/>
            <person name="Hornischer K."/>
            <person name="Kauer G."/>
            <person name="Loehnert T.-H."/>
            <person name="Nordsiek G."/>
            <person name="Reichelt J."/>
            <person name="Scharfe M."/>
            <person name="Schoen O."/>
            <person name="Bargues M."/>
            <person name="Terol J."/>
            <person name="Climent J."/>
            <person name="Navarro P."/>
            <person name="Collado C."/>
            <person name="Perez-Perez A."/>
            <person name="Ottenwaelder B."/>
            <person name="Duchemin D."/>
            <person name="Cooke R."/>
            <person name="Laudie M."/>
            <person name="Berger-Llauro C."/>
            <person name="Purnelle B."/>
            <person name="Masuy D."/>
            <person name="de Haan M."/>
            <person name="Maarse A.C."/>
            <person name="Alcaraz J.-P."/>
            <person name="Cottet A."/>
            <person name="Casacuberta E."/>
            <person name="Monfort A."/>
            <person name="Argiriou A."/>
            <person name="Flores M."/>
            <person name="Liguori R."/>
            <person name="Vitale D."/>
            <person name="Mannhaupt G."/>
            <person name="Haase D."/>
            <person name="Schoof H."/>
            <person name="Rudd S."/>
            <person name="Zaccaria P."/>
            <person name="Mewes H.-W."/>
            <person name="Mayer K.F.X."/>
            <person name="Kaul S."/>
            <person name="Town C.D."/>
            <person name="Koo H.L."/>
            <person name="Tallon L.J."/>
            <person name="Jenkins J."/>
            <person name="Rooney T."/>
            <person name="Rizzo M."/>
            <person name="Walts A."/>
            <person name="Utterback T."/>
            <person name="Fujii C.Y."/>
            <person name="Shea T.P."/>
            <person name="Creasy T.H."/>
            <person name="Haas B."/>
            <person name="Maiti R."/>
            <person name="Wu D."/>
            <person name="Peterson J."/>
            <person name="Van Aken S."/>
            <person name="Pai G."/>
            <person name="Militscher J."/>
            <person name="Sellers P."/>
            <person name="Gill J.E."/>
            <person name="Feldblyum T.V."/>
            <person name="Preuss D."/>
            <person name="Lin X."/>
            <person name="Nierman W.C."/>
            <person name="Salzberg S.L."/>
            <person name="White O."/>
            <person name="Venter J.C."/>
            <person name="Fraser C.M."/>
            <person name="Kaneko T."/>
            <person name="Nakamura Y."/>
            <person name="Sato S."/>
            <person name="Kato T."/>
            <person name="Asamizu E."/>
            <person name="Sasamoto S."/>
            <person name="Kimura T."/>
            <person name="Idesawa K."/>
            <person name="Kawashima K."/>
            <person name="Kishida Y."/>
            <person name="Kiyokawa C."/>
            <person name="Kohara M."/>
            <person name="Matsumoto M."/>
            <person name="Matsuno A."/>
            <person name="Muraki A."/>
            <person name="Nakayama S."/>
            <person name="Nakazaki N."/>
            <person name="Shinpo S."/>
            <person name="Takeuchi C."/>
            <person name="Wada T."/>
            <person name="Watanabe A."/>
            <person name="Yamada M."/>
            <person name="Yasuda M."/>
            <person name="Tabata S."/>
        </authorList>
    </citation>
    <scope>NUCLEOTIDE SEQUENCE [LARGE SCALE GENOMIC DNA]</scope>
    <source>
        <strain>cv. Columbia</strain>
    </source>
</reference>
<reference key="2">
    <citation type="journal article" date="2017" name="Plant J.">
        <title>Araport11: a complete reannotation of the Arabidopsis thaliana reference genome.</title>
        <authorList>
            <person name="Cheng C.Y."/>
            <person name="Krishnakumar V."/>
            <person name="Chan A.P."/>
            <person name="Thibaud-Nissen F."/>
            <person name="Schobel S."/>
            <person name="Town C.D."/>
        </authorList>
    </citation>
    <scope>GENOME REANNOTATION</scope>
    <source>
        <strain>cv. Columbia</strain>
    </source>
</reference>
<reference key="3">
    <citation type="journal article" date="2004" name="Plant Cell">
        <title>Genome-wide analysis of Arabidopsis pentatricopeptide repeat proteins reveals their essential role in organelle biogenesis.</title>
        <authorList>
            <person name="Lurin C."/>
            <person name="Andres C."/>
            <person name="Aubourg S."/>
            <person name="Bellaoui M."/>
            <person name="Bitton F."/>
            <person name="Bruyere C."/>
            <person name="Caboche M."/>
            <person name="Debast C."/>
            <person name="Gualberto J."/>
            <person name="Hoffmann B."/>
            <person name="Lecharny A."/>
            <person name="Le Ret M."/>
            <person name="Martin-Magniette M.-L."/>
            <person name="Mireau H."/>
            <person name="Peeters N."/>
            <person name="Renou J.-P."/>
            <person name="Szurek B."/>
            <person name="Taconnat L."/>
            <person name="Small I."/>
        </authorList>
    </citation>
    <scope>GENE FAMILY</scope>
</reference>
<reference key="4">
    <citation type="journal article" date="2015" name="Mol. Plant">
        <title>MEF13 requires MORF3 and MORF8 for RNA editing at eight targets in mitochondrial mRNAs in Arabidopsis thaliana.</title>
        <authorList>
            <person name="Glass F."/>
            <person name="Haertel B."/>
            <person name="Zehrmann A."/>
            <person name="Verbitskiy D."/>
            <person name="Takenaka M."/>
        </authorList>
    </citation>
    <scope>FUNCTION</scope>
    <scope>INTERACTION WITH MORF1/RIP8</scope>
    <scope>SUBCELLULAR LOCATION</scope>
    <scope>DISRUPTION PHENOTYPE</scope>
</reference>
<keyword id="KW-0496">Mitochondrion</keyword>
<keyword id="KW-0507">mRNA processing</keyword>
<keyword id="KW-1185">Reference proteome</keyword>
<keyword id="KW-0677">Repeat</keyword>
<keyword id="KW-0809">Transit peptide</keyword>
<name>PP207_ARATH</name>
<sequence>MAESLRLLHMTRSVVSFNRCLTEKISYRRVPSFSYFTDFLNQVNSVSTTNFSFVFKECAKQGALELGKQAHAHMIISGFRPTTFVLNCLLQVYTNSRDFVSASMVFDKMPLRDVVSWNKMINGYSKSNDMFKANSFFNMMPVRDVVSWNSMLSGYLQNGESLKSIEVFVDMGREGIEFDGRTFAIILKVCSFLEDTSLGMQIHGIVVRVGCDTDVVAASALLDMYAKGKRFVESLRVFQGIPEKNSVSWSAIIAGCVQNNLLSLALKFFKEMQKVNAGVSQSIYASVLRSCAALSELRLGGQLHAHALKSDFAADGIVRTATLDMYAKCDNMQDAQILFDNSENLNRQSYNAMITGYSQEEHGFKALLLFHRLMSSGLGFDEISLSGVFRACALVKGLSEGLQIYGLAIKSSLSLDVCVANAAIDMYGKCQALAEAFRVFDEMRRRDAVSWNAIIAAHEQNGKGYETLFLFVSMLRSRIEPDEFTFGSILKACTGGSLGYGMEIHSSIVKSGMASNSSVGCSLIDMYSKCGMIEEAEKIHSRFFQRANVSGTMEELEKMHNKRLQEMCVSWNSIISGYVMKEQSEDAQMLFTRMMEMGITPDKFTYATVLDTCANLASAGLGKQIHAQVIKKELQSDVYICSTLVDMYSKCGDLHDSRLMFEKSLRRDFVTWNAMICGYAHHGKGEEAIQLFERMILENIKPNHVTFISILRACAHMGLIDKGLEYFYMMKRDYGLDPQLPHYSNMVDILGKSGKVKRALELIREMPFEADDVIWRTLLGVCTIHRNNVEVAEEATAALLRLDPQDSSAYTLLSNVYADAGMWEKVSDLRRNMRGFKLKKEPGCSWVELKDELHVFLVGDKAHPRWEEIYEELGLIYSEMKPFDDSSFVRGVEVEEEDQWCYC</sequence>
<feature type="transit peptide" description="Mitochondrion" evidence="1">
    <location>
        <begin position="1"/>
        <end position="31"/>
    </location>
</feature>
<feature type="chain" id="PRO_0000356066" description="Pentatricopeptide repeat-containing protein At3g02330, mitochondrial">
    <location>
        <begin position="32"/>
        <end position="903"/>
    </location>
</feature>
<feature type="repeat" description="PPR 1">
    <location>
        <begin position="47"/>
        <end position="81"/>
    </location>
</feature>
<feature type="repeat" description="PPR 2">
    <location>
        <begin position="82"/>
        <end position="112"/>
    </location>
</feature>
<feature type="repeat" description="PPR 3">
    <location>
        <begin position="113"/>
        <end position="143"/>
    </location>
</feature>
<feature type="repeat" description="PPR 4">
    <location>
        <begin position="144"/>
        <end position="178"/>
    </location>
</feature>
<feature type="repeat" description="PPR 5">
    <location>
        <begin position="179"/>
        <end position="213"/>
    </location>
</feature>
<feature type="repeat" description="PPR 6">
    <location>
        <begin position="214"/>
        <end position="244"/>
    </location>
</feature>
<feature type="repeat" description="PPR 7">
    <location>
        <begin position="245"/>
        <end position="279"/>
    </location>
</feature>
<feature type="repeat" description="PPR 8">
    <location>
        <begin position="280"/>
        <end position="314"/>
    </location>
</feature>
<feature type="repeat" description="PPR 9">
    <location>
        <begin position="346"/>
        <end position="380"/>
    </location>
</feature>
<feature type="repeat" description="PPR 10">
    <location>
        <begin position="381"/>
        <end position="415"/>
    </location>
</feature>
<feature type="repeat" description="PPR 11">
    <location>
        <begin position="416"/>
        <end position="446"/>
    </location>
</feature>
<feature type="repeat" description="PPR 12">
    <location>
        <begin position="447"/>
        <end position="481"/>
    </location>
</feature>
<feature type="repeat" description="PPR 13">
    <location>
        <begin position="482"/>
        <end position="515"/>
    </location>
</feature>
<feature type="repeat" description="PPR 14">
    <location>
        <begin position="516"/>
        <end position="550"/>
    </location>
</feature>
<feature type="repeat" description="PPR 15">
    <location>
        <begin position="567"/>
        <end position="601"/>
    </location>
</feature>
<feature type="repeat" description="PPR 16">
    <location>
        <begin position="602"/>
        <end position="636"/>
    </location>
</feature>
<feature type="repeat" description="PPR 17">
    <location>
        <begin position="637"/>
        <end position="667"/>
    </location>
</feature>
<feature type="repeat" description="PPR 18">
    <location>
        <begin position="668"/>
        <end position="702"/>
    </location>
</feature>
<feature type="repeat" description="PPR 19">
    <location>
        <begin position="703"/>
        <end position="738"/>
    </location>
</feature>
<feature type="repeat" description="PPR 20">
    <location>
        <begin position="739"/>
        <end position="769"/>
    </location>
</feature>
<feature type="region of interest" description="Type E motif">
    <location>
        <begin position="774"/>
        <end position="850"/>
    </location>
</feature>
<feature type="region of interest" description="Type E(+) motif">
    <location>
        <begin position="851"/>
        <end position="881"/>
    </location>
</feature>
<gene>
    <name type="primary">PCMP-E90</name>
    <name evidence="3" type="synonym">MEF13</name>
    <name type="ordered locus">At3g02330</name>
    <name type="ORF">F11A12.2</name>
    <name type="ORF">F14P3.1</name>
</gene>
<protein>
    <recommendedName>
        <fullName>Pentatricopeptide repeat-containing protein At3g02330, mitochondrial</fullName>
    </recommendedName>
    <alternativeName>
        <fullName evidence="3">Mitochondrial editing factor 13</fullName>
    </alternativeName>
</protein>